<accession>A3Q7A8</accession>
<sequence>MQPGGQPDMSALLAQAQQMQQQLMEAQESLANSEVHGQAGGGLVQVTMKGSGEVTSVAIDPKVVDPDDVETLQDLVVGAIADAAKQVTILAHDRLGPLAGGMGGLGIPGL</sequence>
<dbReference type="EMBL" id="CP000580">
    <property type="protein sequence ID" value="ABO01036.1"/>
    <property type="molecule type" value="Genomic_DNA"/>
</dbReference>
<dbReference type="SMR" id="A3Q7A8"/>
<dbReference type="KEGG" id="mjl:Mjls_5272"/>
<dbReference type="HOGENOM" id="CLU_140930_4_0_11"/>
<dbReference type="BioCyc" id="MSP164757:G1G8C-5326-MONOMER"/>
<dbReference type="GO" id="GO:0043590">
    <property type="term" value="C:bacterial nucleoid"/>
    <property type="evidence" value="ECO:0007669"/>
    <property type="project" value="UniProtKB-UniRule"/>
</dbReference>
<dbReference type="GO" id="GO:0005829">
    <property type="term" value="C:cytosol"/>
    <property type="evidence" value="ECO:0007669"/>
    <property type="project" value="TreeGrafter"/>
</dbReference>
<dbReference type="GO" id="GO:0003677">
    <property type="term" value="F:DNA binding"/>
    <property type="evidence" value="ECO:0007669"/>
    <property type="project" value="UniProtKB-UniRule"/>
</dbReference>
<dbReference type="FunFam" id="3.30.1310.10:FF:000003">
    <property type="entry name" value="Nucleoid-associated protein MRA_3753"/>
    <property type="match status" value="1"/>
</dbReference>
<dbReference type="Gene3D" id="3.30.1310.10">
    <property type="entry name" value="Nucleoid-associated protein YbaB-like domain"/>
    <property type="match status" value="1"/>
</dbReference>
<dbReference type="HAMAP" id="MF_00274">
    <property type="entry name" value="DNA_YbaB_EbfC"/>
    <property type="match status" value="1"/>
</dbReference>
<dbReference type="InterPro" id="IPR036894">
    <property type="entry name" value="YbaB-like_sf"/>
</dbReference>
<dbReference type="InterPro" id="IPR004401">
    <property type="entry name" value="YbaB/EbfC"/>
</dbReference>
<dbReference type="NCBIfam" id="TIGR00103">
    <property type="entry name" value="DNA_YbaB_EbfC"/>
    <property type="match status" value="1"/>
</dbReference>
<dbReference type="PANTHER" id="PTHR33449">
    <property type="entry name" value="NUCLEOID-ASSOCIATED PROTEIN YBAB"/>
    <property type="match status" value="1"/>
</dbReference>
<dbReference type="PANTHER" id="PTHR33449:SF1">
    <property type="entry name" value="NUCLEOID-ASSOCIATED PROTEIN YBAB"/>
    <property type="match status" value="1"/>
</dbReference>
<dbReference type="Pfam" id="PF02575">
    <property type="entry name" value="YbaB_DNA_bd"/>
    <property type="match status" value="1"/>
</dbReference>
<dbReference type="PIRSF" id="PIRSF004555">
    <property type="entry name" value="UCP004555"/>
    <property type="match status" value="1"/>
</dbReference>
<dbReference type="SUPFAM" id="SSF82607">
    <property type="entry name" value="YbaB-like"/>
    <property type="match status" value="1"/>
</dbReference>
<protein>
    <recommendedName>
        <fullName evidence="1">Nucleoid-associated protein Mjls_5272</fullName>
    </recommendedName>
</protein>
<proteinExistence type="inferred from homology"/>
<feature type="chain" id="PRO_1000003776" description="Nucleoid-associated protein Mjls_5272">
    <location>
        <begin position="1"/>
        <end position="110"/>
    </location>
</feature>
<name>Y5272_MYCSJ</name>
<reference key="1">
    <citation type="submission" date="2007-02" db="EMBL/GenBank/DDBJ databases">
        <title>Complete sequence of Mycobacterium sp. JLS.</title>
        <authorList>
            <consortium name="US DOE Joint Genome Institute"/>
            <person name="Copeland A."/>
            <person name="Lucas S."/>
            <person name="Lapidus A."/>
            <person name="Barry K."/>
            <person name="Detter J.C."/>
            <person name="Glavina del Rio T."/>
            <person name="Hammon N."/>
            <person name="Israni S."/>
            <person name="Dalin E."/>
            <person name="Tice H."/>
            <person name="Pitluck S."/>
            <person name="Chain P."/>
            <person name="Malfatti S."/>
            <person name="Shin M."/>
            <person name="Vergez L."/>
            <person name="Schmutz J."/>
            <person name="Larimer F."/>
            <person name="Land M."/>
            <person name="Hauser L."/>
            <person name="Kyrpides N."/>
            <person name="Mikhailova N."/>
            <person name="Miller C.D."/>
            <person name="Anderson A.J."/>
            <person name="Sims R.C."/>
            <person name="Richardson P."/>
        </authorList>
    </citation>
    <scope>NUCLEOTIDE SEQUENCE [LARGE SCALE GENOMIC DNA]</scope>
    <source>
        <strain>JLS</strain>
    </source>
</reference>
<evidence type="ECO:0000255" key="1">
    <source>
        <dbReference type="HAMAP-Rule" id="MF_00274"/>
    </source>
</evidence>
<organism>
    <name type="scientific">Mycobacterium sp. (strain JLS)</name>
    <dbReference type="NCBI Taxonomy" id="164757"/>
    <lineage>
        <taxon>Bacteria</taxon>
        <taxon>Bacillati</taxon>
        <taxon>Actinomycetota</taxon>
        <taxon>Actinomycetes</taxon>
        <taxon>Mycobacteriales</taxon>
        <taxon>Mycobacteriaceae</taxon>
        <taxon>Mycobacterium</taxon>
    </lineage>
</organism>
<gene>
    <name type="ordered locus">Mjls_5272</name>
</gene>
<keyword id="KW-0963">Cytoplasm</keyword>
<keyword id="KW-0238">DNA-binding</keyword>
<comment type="function">
    <text evidence="1">Binds to DNA and alters its conformation. May be involved in regulation of gene expression, nucleoid organization and DNA protection.</text>
</comment>
<comment type="subunit">
    <text evidence="1">Homodimer.</text>
</comment>
<comment type="subcellular location">
    <subcellularLocation>
        <location evidence="1">Cytoplasm</location>
        <location evidence="1">Nucleoid</location>
    </subcellularLocation>
</comment>
<comment type="similarity">
    <text evidence="1">Belongs to the YbaB/EbfC family.</text>
</comment>